<comment type="function">
    <text evidence="3">Component of the 26S proteasome, a multiprotein complex involved in the ATP-dependent degradation of ubiquitinated proteins. This complex plays a key role in the maintenance of protein homeostasis by removing misfolded or damaged proteins, which could impair cellular functions, and by removing proteins whose functions are no longer required. Therefore, the proteasome participates in numerous cellular processes, including cell cycle progression, apoptosis, or DNA damage repair.</text>
</comment>
<comment type="subunit">
    <text evidence="4 5 6 7 8">Component of the 19S proteasome regulatory particle complex. The 26S proteasome consists of a 20S core particle (CP) and two 19S regulatory subunits (RP). The regulatory particle is made of a lid composed of 9 subunits, a base containing 6 ATPases and few additional components including PSMD1 (PubMed:27342858, PubMed:27428775). Interacts with ADRM1 (PubMed:16906146, PubMed:16990800). Interacts with ZFAND1 (PubMed:29804830).</text>
</comment>
<comment type="interaction">
    <interactant intactId="EBI-357874">
        <id>Q99460</id>
    </interactant>
    <interactant intactId="EBI-954387">
        <id>Q16186</id>
        <label>ADRM1</label>
    </interactant>
    <organismsDiffer>false</organismsDiffer>
    <experiments>7</experiments>
</comment>
<comment type="interaction">
    <interactant intactId="EBI-357874">
        <id>Q99460</id>
    </interactant>
    <interactant intactId="EBI-359318">
        <id>P55036</id>
        <label>PSMD4</label>
    </interactant>
    <organismsDiffer>false</organismsDiffer>
    <experiments>4</experiments>
</comment>
<comment type="interaction">
    <interactant intactId="EBI-15703973">
        <id>Q99460-1</id>
    </interactant>
    <interactant intactId="EBI-8762776">
        <id>Q9JKV1</id>
        <label>Adrm1</label>
    </interactant>
    <organismsDiffer>true</organismsDiffer>
    <experiments>2</experiments>
</comment>
<comment type="alternative products">
    <event type="alternative splicing"/>
    <isoform>
        <id>Q99460-1</id>
        <name>1</name>
        <sequence type="displayed"/>
    </isoform>
    <isoform>
        <id>Q99460-2</id>
        <name>2</name>
        <sequence type="described" ref="VSP_011475"/>
    </isoform>
</comment>
<comment type="similarity">
    <text evidence="10">Belongs to the proteasome subunit S1 family.</text>
</comment>
<comment type="sequence caution" evidence="10">
    <conflict type="miscellaneous discrepancy">
        <sequence resource="EMBL-CDS" id="AAH01053"/>
    </conflict>
    <text>Contaminating sequence. Potential poly-A sequence.</text>
</comment>
<comment type="sequence caution" evidence="10">
    <conflict type="miscellaneous discrepancy">
        <sequence resource="EMBL-CDS" id="AAH14013"/>
    </conflict>
    <text>Contaminating sequence. Potential poly-A sequence.</text>
</comment>
<comment type="sequence caution" evidence="10">
    <conflict type="miscellaneous discrepancy">
        <sequence resource="EMBL-CDS" id="AAH39845"/>
    </conflict>
    <text>Contaminating sequence. Potential poly-A sequence.</text>
</comment>
<comment type="sequence caution" evidence="10">
    <conflict type="miscellaneous discrepancy">
        <sequence resource="EMBL-CDS" id="AAH47897"/>
    </conflict>
    <text>Contaminating sequence. Potential poly-A sequence.</text>
</comment>
<comment type="sequence caution" evidence="10">
    <conflict type="miscellaneous discrepancy">
        <sequence resource="EMBL-CDS" id="AAH64398"/>
    </conflict>
    <text>Contaminating sequence. Potential poly-A sequence.</text>
</comment>
<comment type="sequence caution" evidence="10">
    <conflict type="miscellaneous discrepancy">
        <sequence resource="EMBL-CDS" id="AAH73833"/>
    </conflict>
    <text>Contaminating sequence. Potential poly-A sequence.</text>
</comment>
<name>PSMD1_HUMAN</name>
<dbReference type="EMBL" id="D44466">
    <property type="protein sequence ID" value="BAA07918.1"/>
    <property type="molecule type" value="mRNA"/>
</dbReference>
<dbReference type="EMBL" id="AC009407">
    <property type="protein sequence ID" value="AAX93127.1"/>
    <property type="molecule type" value="Genomic_DNA"/>
</dbReference>
<dbReference type="EMBL" id="BC001053">
    <property type="protein sequence ID" value="AAH01053.1"/>
    <property type="status" value="ALT_SEQ"/>
    <property type="molecule type" value="mRNA"/>
</dbReference>
<dbReference type="EMBL" id="BC014013">
    <property type="protein sequence ID" value="AAH14013.1"/>
    <property type="status" value="ALT_SEQ"/>
    <property type="molecule type" value="mRNA"/>
</dbReference>
<dbReference type="EMBL" id="BC039845">
    <property type="protein sequence ID" value="AAH39845.1"/>
    <property type="status" value="ALT_SEQ"/>
    <property type="molecule type" value="mRNA"/>
</dbReference>
<dbReference type="EMBL" id="BC047897">
    <property type="protein sequence ID" value="AAH47897.1"/>
    <property type="status" value="ALT_SEQ"/>
    <property type="molecule type" value="mRNA"/>
</dbReference>
<dbReference type="EMBL" id="BC064398">
    <property type="protein sequence ID" value="AAH64398.1"/>
    <property type="status" value="ALT_SEQ"/>
    <property type="molecule type" value="mRNA"/>
</dbReference>
<dbReference type="EMBL" id="BC073833">
    <property type="protein sequence ID" value="AAH73833.1"/>
    <property type="status" value="ALT_SEQ"/>
    <property type="molecule type" value="mRNA"/>
</dbReference>
<dbReference type="EMBL" id="BC094720">
    <property type="protein sequence ID" value="AAH94720.1"/>
    <property type="molecule type" value="mRNA"/>
</dbReference>
<dbReference type="EMBL" id="BC112344">
    <property type="protein sequence ID" value="AAI12345.1"/>
    <property type="molecule type" value="mRNA"/>
</dbReference>
<dbReference type="EMBL" id="BC114434">
    <property type="protein sequence ID" value="AAI14435.1"/>
    <property type="molecule type" value="mRNA"/>
</dbReference>
<dbReference type="CCDS" id="CCDS2482.1">
    <molecule id="Q99460-1"/>
</dbReference>
<dbReference type="CCDS" id="CCDS54436.1">
    <molecule id="Q99460-2"/>
</dbReference>
<dbReference type="RefSeq" id="NP_001177966.1">
    <molecule id="Q99460-2"/>
    <property type="nucleotide sequence ID" value="NM_001191037.2"/>
</dbReference>
<dbReference type="RefSeq" id="NP_002798.2">
    <molecule id="Q99460-1"/>
    <property type="nucleotide sequence ID" value="NM_002807.3"/>
</dbReference>
<dbReference type="PDB" id="5GJQ">
    <property type="method" value="EM"/>
    <property type="resolution" value="4.50 A"/>
    <property type="chains" value="N=1-953"/>
</dbReference>
<dbReference type="PDB" id="5GJR">
    <property type="method" value="EM"/>
    <property type="resolution" value="3.50 A"/>
    <property type="chains" value="1/N=1-953"/>
</dbReference>
<dbReference type="PDB" id="5L4K">
    <property type="method" value="EM"/>
    <property type="resolution" value="4.50 A"/>
    <property type="chains" value="N=1-953"/>
</dbReference>
<dbReference type="PDB" id="5LN3">
    <property type="method" value="EM"/>
    <property type="resolution" value="6.80 A"/>
    <property type="chains" value="N=1-953"/>
</dbReference>
<dbReference type="PDB" id="5M32">
    <property type="method" value="EM"/>
    <property type="resolution" value="3.80 A"/>
    <property type="chains" value="i=1-953"/>
</dbReference>
<dbReference type="PDB" id="5T0C">
    <property type="method" value="EM"/>
    <property type="resolution" value="3.80 A"/>
    <property type="chains" value="AU/BU=1-953"/>
</dbReference>
<dbReference type="PDB" id="5T0G">
    <property type="method" value="EM"/>
    <property type="resolution" value="4.40 A"/>
    <property type="chains" value="U=1-953"/>
</dbReference>
<dbReference type="PDB" id="5T0H">
    <property type="method" value="EM"/>
    <property type="resolution" value="6.80 A"/>
    <property type="chains" value="U=1-953"/>
</dbReference>
<dbReference type="PDB" id="5T0I">
    <property type="method" value="EM"/>
    <property type="resolution" value="8.00 A"/>
    <property type="chains" value="U=1-953"/>
</dbReference>
<dbReference type="PDB" id="5T0J">
    <property type="method" value="EM"/>
    <property type="resolution" value="8.00 A"/>
    <property type="chains" value="U=1-953"/>
</dbReference>
<dbReference type="PDB" id="5V1Y">
    <property type="method" value="X-ray"/>
    <property type="resolution" value="1.42 A"/>
    <property type="chains" value="E/F=940-953"/>
</dbReference>
<dbReference type="PDB" id="5V1Z">
    <property type="method" value="X-ray"/>
    <property type="resolution" value="2.00 A"/>
    <property type="chains" value="E/F=932-953"/>
</dbReference>
<dbReference type="PDB" id="5VFP">
    <property type="method" value="EM"/>
    <property type="resolution" value="4.20 A"/>
    <property type="chains" value="U=7-917"/>
</dbReference>
<dbReference type="PDB" id="5VFQ">
    <property type="method" value="EM"/>
    <property type="resolution" value="4.20 A"/>
    <property type="chains" value="U=7-917"/>
</dbReference>
<dbReference type="PDB" id="5VFR">
    <property type="method" value="EM"/>
    <property type="resolution" value="4.90 A"/>
    <property type="chains" value="U=7-917"/>
</dbReference>
<dbReference type="PDB" id="5VFS">
    <property type="method" value="EM"/>
    <property type="resolution" value="3.60 A"/>
    <property type="chains" value="U=7-917"/>
</dbReference>
<dbReference type="PDB" id="5VFT">
    <property type="method" value="EM"/>
    <property type="resolution" value="7.00 A"/>
    <property type="chains" value="U=7-917"/>
</dbReference>
<dbReference type="PDB" id="5VFU">
    <property type="method" value="EM"/>
    <property type="resolution" value="5.80 A"/>
    <property type="chains" value="U=7-917"/>
</dbReference>
<dbReference type="PDB" id="5VGZ">
    <property type="method" value="EM"/>
    <property type="resolution" value="3.70 A"/>
    <property type="chains" value="U=1-935"/>
</dbReference>
<dbReference type="PDB" id="5VHF">
    <property type="method" value="EM"/>
    <property type="resolution" value="5.70 A"/>
    <property type="chains" value="U=95-935"/>
</dbReference>
<dbReference type="PDB" id="5VHH">
    <property type="method" value="EM"/>
    <property type="resolution" value="6.10 A"/>
    <property type="chains" value="U=1-935"/>
</dbReference>
<dbReference type="PDB" id="5VHI">
    <property type="method" value="EM"/>
    <property type="resolution" value="6.80 A"/>
    <property type="chains" value="U=1-935"/>
</dbReference>
<dbReference type="PDB" id="5VHS">
    <property type="method" value="EM"/>
    <property type="resolution" value="8.80 A"/>
    <property type="chains" value="U=1-935"/>
</dbReference>
<dbReference type="PDB" id="6CO4">
    <property type="method" value="NMR"/>
    <property type="chains" value="B=940-953"/>
</dbReference>
<dbReference type="PDB" id="6MSB">
    <property type="method" value="EM"/>
    <property type="resolution" value="3.00 A"/>
    <property type="chains" value="U=1-953"/>
</dbReference>
<dbReference type="PDB" id="6MSD">
    <property type="method" value="EM"/>
    <property type="resolution" value="3.20 A"/>
    <property type="chains" value="U=1-953"/>
</dbReference>
<dbReference type="PDB" id="6MSE">
    <property type="method" value="EM"/>
    <property type="resolution" value="3.30 A"/>
    <property type="chains" value="C=142-210"/>
</dbReference>
<dbReference type="PDB" id="6MSG">
    <property type="method" value="EM"/>
    <property type="resolution" value="3.50 A"/>
    <property type="chains" value="U=1-953"/>
</dbReference>
<dbReference type="PDB" id="6MSH">
    <property type="method" value="EM"/>
    <property type="resolution" value="3.60 A"/>
    <property type="chains" value="U=1-953"/>
</dbReference>
<dbReference type="PDB" id="6MSJ">
    <property type="method" value="EM"/>
    <property type="resolution" value="3.30 A"/>
    <property type="chains" value="U=1-953"/>
</dbReference>
<dbReference type="PDB" id="6MSK">
    <property type="method" value="EM"/>
    <property type="resolution" value="3.20 A"/>
    <property type="chains" value="U=1-953"/>
</dbReference>
<dbReference type="PDB" id="6OI4">
    <property type="method" value="X-ray"/>
    <property type="resolution" value="1.76 A"/>
    <property type="chains" value="E/F=940-952"/>
</dbReference>
<dbReference type="PDB" id="6UYI">
    <property type="method" value="NMR"/>
    <property type="chains" value="B=940-953"/>
</dbReference>
<dbReference type="PDB" id="6UYJ">
    <property type="method" value="NMR"/>
    <property type="chains" value="B=940-953"/>
</dbReference>
<dbReference type="PDB" id="6WJD">
    <property type="method" value="EM"/>
    <property type="resolution" value="4.80 A"/>
    <property type="chains" value="U=1-953"/>
</dbReference>
<dbReference type="PDB" id="6WJN">
    <property type="method" value="EM"/>
    <property type="resolution" value="5.70 A"/>
    <property type="chains" value="U=7-917"/>
</dbReference>
<dbReference type="PDB" id="7QXN">
    <property type="method" value="EM"/>
    <property type="resolution" value="3.70 A"/>
    <property type="chains" value="U=1-953"/>
</dbReference>
<dbReference type="PDB" id="7QXP">
    <property type="method" value="EM"/>
    <property type="resolution" value="3.60 A"/>
    <property type="chains" value="U=1-953"/>
</dbReference>
<dbReference type="PDB" id="7QXU">
    <property type="method" value="EM"/>
    <property type="resolution" value="4.30 A"/>
    <property type="chains" value="U=1-953"/>
</dbReference>
<dbReference type="PDB" id="7QXW">
    <property type="method" value="EM"/>
    <property type="resolution" value="4.10 A"/>
    <property type="chains" value="U=1-953"/>
</dbReference>
<dbReference type="PDB" id="7QXX">
    <property type="method" value="EM"/>
    <property type="resolution" value="4.40 A"/>
    <property type="chains" value="U=1-953"/>
</dbReference>
<dbReference type="PDB" id="7QY7">
    <property type="method" value="EM"/>
    <property type="resolution" value="4.70 A"/>
    <property type="chains" value="U=1-953"/>
</dbReference>
<dbReference type="PDB" id="7QYA">
    <property type="method" value="EM"/>
    <property type="resolution" value="4.80 A"/>
    <property type="chains" value="U=1-953"/>
</dbReference>
<dbReference type="PDB" id="7QYB">
    <property type="method" value="EM"/>
    <property type="resolution" value="4.10 A"/>
    <property type="chains" value="U=1-953"/>
</dbReference>
<dbReference type="PDB" id="7W37">
    <property type="method" value="EM"/>
    <property type="resolution" value="3.00 A"/>
    <property type="chains" value="U=1-953"/>
</dbReference>
<dbReference type="PDB" id="7W38">
    <property type="method" value="EM"/>
    <property type="resolution" value="3.10 A"/>
    <property type="chains" value="U=1-953"/>
</dbReference>
<dbReference type="PDB" id="7W39">
    <property type="method" value="EM"/>
    <property type="resolution" value="3.20 A"/>
    <property type="chains" value="U=1-953"/>
</dbReference>
<dbReference type="PDB" id="7W3A">
    <property type="method" value="EM"/>
    <property type="resolution" value="3.50 A"/>
    <property type="chains" value="U=1-953"/>
</dbReference>
<dbReference type="PDB" id="7W3B">
    <property type="method" value="EM"/>
    <property type="resolution" value="3.60 A"/>
    <property type="chains" value="U=1-953"/>
</dbReference>
<dbReference type="PDB" id="7W3C">
    <property type="method" value="EM"/>
    <property type="resolution" value="3.40 A"/>
    <property type="chains" value="U=1-953"/>
</dbReference>
<dbReference type="PDB" id="7W3F">
    <property type="method" value="EM"/>
    <property type="resolution" value="3.30 A"/>
    <property type="chains" value="U=1-953"/>
</dbReference>
<dbReference type="PDB" id="7W3G">
    <property type="method" value="EM"/>
    <property type="resolution" value="3.20 A"/>
    <property type="chains" value="U=1-953"/>
</dbReference>
<dbReference type="PDB" id="7W3H">
    <property type="method" value="EM"/>
    <property type="resolution" value="3.20 A"/>
    <property type="chains" value="U=1-953"/>
</dbReference>
<dbReference type="PDB" id="7W3I">
    <property type="method" value="EM"/>
    <property type="resolution" value="3.50 A"/>
    <property type="chains" value="U=1-953"/>
</dbReference>
<dbReference type="PDB" id="7W3J">
    <property type="method" value="EM"/>
    <property type="resolution" value="3.50 A"/>
    <property type="chains" value="U=1-953"/>
</dbReference>
<dbReference type="PDB" id="7W3K">
    <property type="method" value="EM"/>
    <property type="resolution" value="3.60 A"/>
    <property type="chains" value="U=1-953"/>
</dbReference>
<dbReference type="PDB" id="7W3M">
    <property type="method" value="EM"/>
    <property type="resolution" value="3.50 A"/>
    <property type="chains" value="U=1-953"/>
</dbReference>
<dbReference type="PDB" id="8CVT">
    <property type="method" value="EM"/>
    <property type="resolution" value="3.00 A"/>
    <property type="chains" value="U=1-953"/>
</dbReference>
<dbReference type="PDB" id="8JRI">
    <property type="method" value="EM"/>
    <property type="resolution" value="3.40 A"/>
    <property type="chains" value="U=1-953"/>
</dbReference>
<dbReference type="PDB" id="8JRT">
    <property type="method" value="EM"/>
    <property type="resolution" value="3.60 A"/>
    <property type="chains" value="U=1-953"/>
</dbReference>
<dbReference type="PDB" id="8JTI">
    <property type="method" value="EM"/>
    <property type="resolution" value="3.80 A"/>
    <property type="chains" value="U=1-953"/>
</dbReference>
<dbReference type="PDB" id="8K0G">
    <property type="method" value="EM"/>
    <property type="resolution" value="3.80 A"/>
    <property type="chains" value="U=1-953"/>
</dbReference>
<dbReference type="PDB" id="8USB">
    <property type="method" value="EM"/>
    <property type="resolution" value="2.73 A"/>
    <property type="chains" value="U=1-953"/>
</dbReference>
<dbReference type="PDB" id="8USC">
    <property type="method" value="EM"/>
    <property type="resolution" value="3.10 A"/>
    <property type="chains" value="U=1-953"/>
</dbReference>
<dbReference type="PDB" id="8USD">
    <property type="method" value="EM"/>
    <property type="resolution" value="2.70 A"/>
    <property type="chains" value="U=1-953"/>
</dbReference>
<dbReference type="PDB" id="9E8G">
    <property type="method" value="EM"/>
    <property type="resolution" value="3.01 A"/>
    <property type="chains" value="U=1-953"/>
</dbReference>
<dbReference type="PDB" id="9E8H">
    <property type="method" value="EM"/>
    <property type="resolution" value="2.90 A"/>
    <property type="chains" value="U=1-953"/>
</dbReference>
<dbReference type="PDB" id="9E8I">
    <property type="method" value="EM"/>
    <property type="resolution" value="2.87 A"/>
    <property type="chains" value="U=1-953"/>
</dbReference>
<dbReference type="PDB" id="9E8J">
    <property type="method" value="EM"/>
    <property type="resolution" value="3.47 A"/>
    <property type="chains" value="U=1-953"/>
</dbReference>
<dbReference type="PDB" id="9E8K">
    <property type="method" value="EM"/>
    <property type="resolution" value="4.08 A"/>
    <property type="chains" value="U=1-953"/>
</dbReference>
<dbReference type="PDB" id="9E8L">
    <property type="method" value="EM"/>
    <property type="resolution" value="3.59 A"/>
    <property type="chains" value="U=1-953"/>
</dbReference>
<dbReference type="PDB" id="9E8N">
    <property type="method" value="EM"/>
    <property type="resolution" value="3.62 A"/>
    <property type="chains" value="U=1-953"/>
</dbReference>
<dbReference type="PDB" id="9E8O">
    <property type="method" value="EM"/>
    <property type="resolution" value="3.10 A"/>
    <property type="chains" value="U=1-953"/>
</dbReference>
<dbReference type="PDB" id="9E8Q">
    <property type="method" value="EM"/>
    <property type="resolution" value="3.16 A"/>
    <property type="chains" value="U=1-953"/>
</dbReference>
<dbReference type="PDBsum" id="5GJQ"/>
<dbReference type="PDBsum" id="5GJR"/>
<dbReference type="PDBsum" id="5L4K"/>
<dbReference type="PDBsum" id="5LN3"/>
<dbReference type="PDBsum" id="5M32"/>
<dbReference type="PDBsum" id="5T0C"/>
<dbReference type="PDBsum" id="5T0G"/>
<dbReference type="PDBsum" id="5T0H"/>
<dbReference type="PDBsum" id="5T0I"/>
<dbReference type="PDBsum" id="5T0J"/>
<dbReference type="PDBsum" id="5V1Y"/>
<dbReference type="PDBsum" id="5V1Z"/>
<dbReference type="PDBsum" id="5VFP"/>
<dbReference type="PDBsum" id="5VFQ"/>
<dbReference type="PDBsum" id="5VFR"/>
<dbReference type="PDBsum" id="5VFS"/>
<dbReference type="PDBsum" id="5VFT"/>
<dbReference type="PDBsum" id="5VFU"/>
<dbReference type="PDBsum" id="5VGZ"/>
<dbReference type="PDBsum" id="5VHF"/>
<dbReference type="PDBsum" id="5VHH"/>
<dbReference type="PDBsum" id="5VHI"/>
<dbReference type="PDBsum" id="5VHS"/>
<dbReference type="PDBsum" id="6CO4"/>
<dbReference type="PDBsum" id="6MSB"/>
<dbReference type="PDBsum" id="6MSD"/>
<dbReference type="PDBsum" id="6MSE"/>
<dbReference type="PDBsum" id="6MSG"/>
<dbReference type="PDBsum" id="6MSH"/>
<dbReference type="PDBsum" id="6MSJ"/>
<dbReference type="PDBsum" id="6MSK"/>
<dbReference type="PDBsum" id="6OI4"/>
<dbReference type="PDBsum" id="6UYI"/>
<dbReference type="PDBsum" id="6UYJ"/>
<dbReference type="PDBsum" id="6WJD"/>
<dbReference type="PDBsum" id="6WJN"/>
<dbReference type="PDBsum" id="7QXN"/>
<dbReference type="PDBsum" id="7QXP"/>
<dbReference type="PDBsum" id="7QXU"/>
<dbReference type="PDBsum" id="7QXW"/>
<dbReference type="PDBsum" id="7QXX"/>
<dbReference type="PDBsum" id="7QY7"/>
<dbReference type="PDBsum" id="7QYA"/>
<dbReference type="PDBsum" id="7QYB"/>
<dbReference type="PDBsum" id="7W37"/>
<dbReference type="PDBsum" id="7W38"/>
<dbReference type="PDBsum" id="7W39"/>
<dbReference type="PDBsum" id="7W3A"/>
<dbReference type="PDBsum" id="7W3B"/>
<dbReference type="PDBsum" id="7W3C"/>
<dbReference type="PDBsum" id="7W3F"/>
<dbReference type="PDBsum" id="7W3G"/>
<dbReference type="PDBsum" id="7W3H"/>
<dbReference type="PDBsum" id="7W3I"/>
<dbReference type="PDBsum" id="7W3J"/>
<dbReference type="PDBsum" id="7W3K"/>
<dbReference type="PDBsum" id="7W3M"/>
<dbReference type="PDBsum" id="8CVT"/>
<dbReference type="PDBsum" id="8JRI"/>
<dbReference type="PDBsum" id="8JRT"/>
<dbReference type="PDBsum" id="8JTI"/>
<dbReference type="PDBsum" id="8K0G"/>
<dbReference type="PDBsum" id="8USB"/>
<dbReference type="PDBsum" id="8USC"/>
<dbReference type="PDBsum" id="8USD"/>
<dbReference type="PDBsum" id="9E8G"/>
<dbReference type="PDBsum" id="9E8H"/>
<dbReference type="PDBsum" id="9E8I"/>
<dbReference type="PDBsum" id="9E8J"/>
<dbReference type="PDBsum" id="9E8K"/>
<dbReference type="PDBsum" id="9E8L"/>
<dbReference type="PDBsum" id="9E8N"/>
<dbReference type="PDBsum" id="9E8O"/>
<dbReference type="PDBsum" id="9E8Q"/>
<dbReference type="EMDB" id="EMD-14201"/>
<dbReference type="EMDB" id="EMD-14202"/>
<dbReference type="EMDB" id="EMD-14203"/>
<dbReference type="EMDB" id="EMD-14204"/>
<dbReference type="EMDB" id="EMD-14205"/>
<dbReference type="EMDB" id="EMD-14209"/>
<dbReference type="EMDB" id="EMD-14210"/>
<dbReference type="EMDB" id="EMD-14211"/>
<dbReference type="EMDB" id="EMD-21691"/>
<dbReference type="EMDB" id="EMD-21696"/>
<dbReference type="EMDB" id="EMD-27018"/>
<dbReference type="EMDB" id="EMD-32272"/>
<dbReference type="EMDB" id="EMD-32273"/>
<dbReference type="EMDB" id="EMD-32274"/>
<dbReference type="EMDB" id="EMD-32275"/>
<dbReference type="EMDB" id="EMD-32276"/>
<dbReference type="EMDB" id="EMD-32277"/>
<dbReference type="EMDB" id="EMD-32278"/>
<dbReference type="EMDB" id="EMD-32279"/>
<dbReference type="EMDB" id="EMD-32280"/>
<dbReference type="EMDB" id="EMD-32281"/>
<dbReference type="EMDB" id="EMD-32282"/>
<dbReference type="EMDB" id="EMD-32283"/>
<dbReference type="EMDB" id="EMD-32284"/>
<dbReference type="EMDB" id="EMD-36598"/>
<dbReference type="EMDB" id="EMD-36605"/>
<dbReference type="EMDB" id="EMD-36645"/>
<dbReference type="EMDB" id="EMD-36764"/>
<dbReference type="EMDB" id="EMD-4089"/>
<dbReference type="EMDB" id="EMD-42506"/>
<dbReference type="EMDB" id="EMD-42507"/>
<dbReference type="EMDB" id="EMD-42508"/>
<dbReference type="EMDB" id="EMD-47719"/>
<dbReference type="EMDB" id="EMD-47720"/>
<dbReference type="EMDB" id="EMD-47721"/>
<dbReference type="EMDB" id="EMD-47722"/>
<dbReference type="EMDB" id="EMD-47723"/>
<dbReference type="EMDB" id="EMD-47724"/>
<dbReference type="EMDB" id="EMD-47725"/>
<dbReference type="EMDB" id="EMD-47726"/>
<dbReference type="EMDB" id="EMD-47727"/>
<dbReference type="EMDB" id="EMD-60138"/>
<dbReference type="EMDB" id="EMD-60139"/>
<dbReference type="EMDB" id="EMD-8663"/>
<dbReference type="EMDB" id="EMD-8664"/>
<dbReference type="EMDB" id="EMD-8665"/>
<dbReference type="EMDB" id="EMD-8666"/>
<dbReference type="EMDB" id="EMD-8667"/>
<dbReference type="EMDB" id="EMD-8668"/>
<dbReference type="EMDB" id="EMD-8672"/>
<dbReference type="EMDB" id="EMD-8674"/>
<dbReference type="EMDB" id="EMD-8675"/>
<dbReference type="EMDB" id="EMD-8676"/>
<dbReference type="EMDB" id="EMD-8684"/>
<dbReference type="EMDB" id="EMD-9216"/>
<dbReference type="EMDB" id="EMD-9217"/>
<dbReference type="EMDB" id="EMD-9218"/>
<dbReference type="EMDB" id="EMD-9219"/>
<dbReference type="EMDB" id="EMD-9220"/>
<dbReference type="EMDB" id="EMD-9221"/>
<dbReference type="EMDB" id="EMD-9222"/>
<dbReference type="EMDB" id="EMD-9512"/>
<dbReference type="SMR" id="Q99460"/>
<dbReference type="BioGRID" id="111680">
    <property type="interactions" value="454"/>
</dbReference>
<dbReference type="ComplexPortal" id="CPX-5993">
    <property type="entry name" value="26S proteasome complex"/>
</dbReference>
<dbReference type="ComplexPortal" id="CPX-8964">
    <property type="entry name" value="19S proteasome regulatory complex"/>
</dbReference>
<dbReference type="ComplexPortal" id="CPX-9082">
    <property type="entry name" value="19S-20S-PA28-alphabeta hybrid proteasome complex"/>
</dbReference>
<dbReference type="ComplexPortal" id="CPX-9085">
    <property type="entry name" value="19S-20S-PA28-gamma hybrid proteasome complex"/>
</dbReference>
<dbReference type="ComplexPortal" id="CPX-9086">
    <property type="entry name" value="30S proteasome complex"/>
</dbReference>
<dbReference type="CORUM" id="Q99460"/>
<dbReference type="DIP" id="DIP-27548N"/>
<dbReference type="FunCoup" id="Q99460">
    <property type="interactions" value="2657"/>
</dbReference>
<dbReference type="IntAct" id="Q99460">
    <property type="interactions" value="132"/>
</dbReference>
<dbReference type="MINT" id="Q99460"/>
<dbReference type="STRING" id="9606.ENSP00000309474"/>
<dbReference type="ChEMBL" id="CHEMBL2364701"/>
<dbReference type="DrugCentral" id="Q99460"/>
<dbReference type="GlyGen" id="Q99460">
    <property type="glycosylation" value="2 sites, 1 N-linked glycan (1 site), 1 O-linked glycan (1 site)"/>
</dbReference>
<dbReference type="iPTMnet" id="Q99460"/>
<dbReference type="MetOSite" id="Q99460"/>
<dbReference type="PhosphoSitePlus" id="Q99460"/>
<dbReference type="SwissPalm" id="Q99460"/>
<dbReference type="BioMuta" id="PSMD1"/>
<dbReference type="DMDM" id="51704332"/>
<dbReference type="CPTAC" id="CPTAC-119"/>
<dbReference type="CPTAC" id="CPTAC-120"/>
<dbReference type="jPOST" id="Q99460"/>
<dbReference type="MassIVE" id="Q99460"/>
<dbReference type="PaxDb" id="9606-ENSP00000309474"/>
<dbReference type="PeptideAtlas" id="Q99460"/>
<dbReference type="ProteomicsDB" id="78278">
    <molecule id="Q99460-1"/>
</dbReference>
<dbReference type="ProteomicsDB" id="78279">
    <molecule id="Q99460-2"/>
</dbReference>
<dbReference type="Pumba" id="Q99460"/>
<dbReference type="Antibodypedia" id="34412">
    <property type="antibodies" value="144 antibodies from 23 providers"/>
</dbReference>
<dbReference type="DNASU" id="5707"/>
<dbReference type="Ensembl" id="ENST00000308696.11">
    <molecule id="Q99460-1"/>
    <property type="protein sequence ID" value="ENSP00000309474.6"/>
    <property type="gene ID" value="ENSG00000173692.14"/>
</dbReference>
<dbReference type="Ensembl" id="ENST00000373635.9">
    <molecule id="Q99460-2"/>
    <property type="protein sequence ID" value="ENSP00000362738.4"/>
    <property type="gene ID" value="ENSG00000173692.14"/>
</dbReference>
<dbReference type="Ensembl" id="ENST00000677230.1">
    <molecule id="Q99460-1"/>
    <property type="protein sequence ID" value="ENSP00000503068.1"/>
    <property type="gene ID" value="ENSG00000173692.14"/>
</dbReference>
<dbReference type="GeneID" id="5707"/>
<dbReference type="KEGG" id="hsa:5707"/>
<dbReference type="MANE-Select" id="ENST00000308696.11">
    <property type="protein sequence ID" value="ENSP00000309474.6"/>
    <property type="RefSeq nucleotide sequence ID" value="NM_002807.4"/>
    <property type="RefSeq protein sequence ID" value="NP_002798.2"/>
</dbReference>
<dbReference type="UCSC" id="uc002vrm.3">
    <molecule id="Q99460-1"/>
    <property type="organism name" value="human"/>
</dbReference>
<dbReference type="AGR" id="HGNC:9554"/>
<dbReference type="CTD" id="5707"/>
<dbReference type="DisGeNET" id="5707"/>
<dbReference type="GeneCards" id="PSMD1"/>
<dbReference type="HGNC" id="HGNC:9554">
    <property type="gene designation" value="PSMD1"/>
</dbReference>
<dbReference type="HPA" id="ENSG00000173692">
    <property type="expression patterns" value="Low tissue specificity"/>
</dbReference>
<dbReference type="MIM" id="617842">
    <property type="type" value="gene"/>
</dbReference>
<dbReference type="neXtProt" id="NX_Q99460"/>
<dbReference type="OpenTargets" id="ENSG00000173692"/>
<dbReference type="PharmGKB" id="PA33899"/>
<dbReference type="VEuPathDB" id="HostDB:ENSG00000173692"/>
<dbReference type="eggNOG" id="KOG2062">
    <property type="taxonomic scope" value="Eukaryota"/>
</dbReference>
<dbReference type="GeneTree" id="ENSGT00940000153386"/>
<dbReference type="HOGENOM" id="CLU_002323_0_0_1"/>
<dbReference type="InParanoid" id="Q99460"/>
<dbReference type="OMA" id="IMFGRQE"/>
<dbReference type="OrthoDB" id="261572at2759"/>
<dbReference type="PAN-GO" id="Q99460">
    <property type="GO annotations" value="4 GO annotations based on evolutionary models"/>
</dbReference>
<dbReference type="PhylomeDB" id="Q99460"/>
<dbReference type="TreeFam" id="TF105742"/>
<dbReference type="BRENDA" id="5.6.1.5">
    <property type="organism ID" value="2681"/>
</dbReference>
<dbReference type="PathwayCommons" id="Q99460"/>
<dbReference type="Reactome" id="R-HSA-1169091">
    <property type="pathway name" value="Activation of NF-kappaB in B cells"/>
</dbReference>
<dbReference type="Reactome" id="R-HSA-1234176">
    <property type="pathway name" value="Oxygen-dependent proline hydroxylation of Hypoxia-inducible Factor Alpha"/>
</dbReference>
<dbReference type="Reactome" id="R-HSA-1236974">
    <property type="pathway name" value="ER-Phagosome pathway"/>
</dbReference>
<dbReference type="Reactome" id="R-HSA-1236978">
    <property type="pathway name" value="Cross-presentation of soluble exogenous antigens (endosomes)"/>
</dbReference>
<dbReference type="Reactome" id="R-HSA-174084">
    <property type="pathway name" value="Autodegradation of Cdh1 by Cdh1:APC/C"/>
</dbReference>
<dbReference type="Reactome" id="R-HSA-174113">
    <property type="pathway name" value="SCF-beta-TrCP mediated degradation of Emi1"/>
</dbReference>
<dbReference type="Reactome" id="R-HSA-174154">
    <property type="pathway name" value="APC/C:Cdc20 mediated degradation of Securin"/>
</dbReference>
<dbReference type="Reactome" id="R-HSA-174178">
    <property type="pathway name" value="APC/C:Cdh1 mediated degradation of Cdc20 and other APC/C:Cdh1 targeted proteins in late mitosis/early G1"/>
</dbReference>
<dbReference type="Reactome" id="R-HSA-174184">
    <property type="pathway name" value="Cdc20:Phospho-APC/C mediated degradation of Cyclin A"/>
</dbReference>
<dbReference type="Reactome" id="R-HSA-180534">
    <property type="pathway name" value="Vpu mediated degradation of CD4"/>
</dbReference>
<dbReference type="Reactome" id="R-HSA-180585">
    <property type="pathway name" value="Vif-mediated degradation of APOBEC3G"/>
</dbReference>
<dbReference type="Reactome" id="R-HSA-187577">
    <property type="pathway name" value="SCF(Skp2)-mediated degradation of p27/p21"/>
</dbReference>
<dbReference type="Reactome" id="R-HSA-195253">
    <property type="pathway name" value="Degradation of beta-catenin by the destruction complex"/>
</dbReference>
<dbReference type="Reactome" id="R-HSA-202424">
    <property type="pathway name" value="Downstream TCR signaling"/>
</dbReference>
<dbReference type="Reactome" id="R-HSA-211733">
    <property type="pathway name" value="Regulation of activated PAK-2p34 by proteasome mediated degradation"/>
</dbReference>
<dbReference type="Reactome" id="R-HSA-2467813">
    <property type="pathway name" value="Separation of Sister Chromatids"/>
</dbReference>
<dbReference type="Reactome" id="R-HSA-2871837">
    <property type="pathway name" value="FCERI mediated NF-kB activation"/>
</dbReference>
<dbReference type="Reactome" id="R-HSA-349425">
    <property type="pathway name" value="Autodegradation of the E3 ubiquitin ligase COP1"/>
</dbReference>
<dbReference type="Reactome" id="R-HSA-350562">
    <property type="pathway name" value="Regulation of ornithine decarboxylase (ODC)"/>
</dbReference>
<dbReference type="Reactome" id="R-HSA-382556">
    <property type="pathway name" value="ABC-family proteins mediated transport"/>
</dbReference>
<dbReference type="Reactome" id="R-HSA-450408">
    <property type="pathway name" value="AUF1 (hnRNP D0) binds and destabilizes mRNA"/>
</dbReference>
<dbReference type="Reactome" id="R-HSA-4608870">
    <property type="pathway name" value="Asymmetric localization of PCP proteins"/>
</dbReference>
<dbReference type="Reactome" id="R-HSA-4641257">
    <property type="pathway name" value="Degradation of AXIN"/>
</dbReference>
<dbReference type="Reactome" id="R-HSA-4641258">
    <property type="pathway name" value="Degradation of DVL"/>
</dbReference>
<dbReference type="Reactome" id="R-HSA-5358346">
    <property type="pathway name" value="Hedgehog ligand biogenesis"/>
</dbReference>
<dbReference type="Reactome" id="R-HSA-5362768">
    <property type="pathway name" value="Hh mutants are degraded by ERAD"/>
</dbReference>
<dbReference type="Reactome" id="R-HSA-5607761">
    <property type="pathway name" value="Dectin-1 mediated noncanonical NF-kB signaling"/>
</dbReference>
<dbReference type="Reactome" id="R-HSA-5607764">
    <property type="pathway name" value="CLEC7A (Dectin-1) signaling"/>
</dbReference>
<dbReference type="Reactome" id="R-HSA-5610780">
    <property type="pathway name" value="Degradation of GLI1 by the proteasome"/>
</dbReference>
<dbReference type="Reactome" id="R-HSA-5610783">
    <property type="pathway name" value="Degradation of GLI2 by the proteasome"/>
</dbReference>
<dbReference type="Reactome" id="R-HSA-5610785">
    <property type="pathway name" value="GLI3 is processed to GLI3R by the proteasome"/>
</dbReference>
<dbReference type="Reactome" id="R-HSA-5632684">
    <property type="pathway name" value="Hedgehog 'on' state"/>
</dbReference>
<dbReference type="Reactome" id="R-HSA-5658442">
    <property type="pathway name" value="Regulation of RAS by GAPs"/>
</dbReference>
<dbReference type="Reactome" id="R-HSA-5668541">
    <property type="pathway name" value="TNFR2 non-canonical NF-kB pathway"/>
</dbReference>
<dbReference type="Reactome" id="R-HSA-5676590">
    <property type="pathway name" value="NIK--&gt;noncanonical NF-kB signaling"/>
</dbReference>
<dbReference type="Reactome" id="R-HSA-5678895">
    <property type="pathway name" value="Defective CFTR causes cystic fibrosis"/>
</dbReference>
<dbReference type="Reactome" id="R-HSA-5687128">
    <property type="pathway name" value="MAPK6/MAPK4 signaling"/>
</dbReference>
<dbReference type="Reactome" id="R-HSA-5689603">
    <property type="pathway name" value="UCH proteinases"/>
</dbReference>
<dbReference type="Reactome" id="R-HSA-5689880">
    <property type="pathway name" value="Ub-specific processing proteases"/>
</dbReference>
<dbReference type="Reactome" id="R-HSA-6798695">
    <property type="pathway name" value="Neutrophil degranulation"/>
</dbReference>
<dbReference type="Reactome" id="R-HSA-68867">
    <property type="pathway name" value="Assembly of the pre-replicative complex"/>
</dbReference>
<dbReference type="Reactome" id="R-HSA-68949">
    <property type="pathway name" value="Orc1 removal from chromatin"/>
</dbReference>
<dbReference type="Reactome" id="R-HSA-69017">
    <property type="pathway name" value="CDK-mediated phosphorylation and removal of Cdc6"/>
</dbReference>
<dbReference type="Reactome" id="R-HSA-69481">
    <property type="pathway name" value="G2/M Checkpoints"/>
</dbReference>
<dbReference type="Reactome" id="R-HSA-69601">
    <property type="pathway name" value="Ubiquitin Mediated Degradation of Phosphorylated Cdc25A"/>
</dbReference>
<dbReference type="Reactome" id="R-HSA-75815">
    <property type="pathway name" value="Ubiquitin-dependent degradation of Cyclin D"/>
</dbReference>
<dbReference type="Reactome" id="R-HSA-8852276">
    <property type="pathway name" value="The role of GTSE1 in G2/M progression after G2 checkpoint"/>
</dbReference>
<dbReference type="Reactome" id="R-HSA-8854050">
    <property type="pathway name" value="FBXL7 down-regulates AURKA during mitotic entry and in early mitosis"/>
</dbReference>
<dbReference type="Reactome" id="R-HSA-8939236">
    <property type="pathway name" value="RUNX1 regulates transcription of genes involved in differentiation of HSCs"/>
</dbReference>
<dbReference type="Reactome" id="R-HSA-8939902">
    <property type="pathway name" value="Regulation of RUNX2 expression and activity"/>
</dbReference>
<dbReference type="Reactome" id="R-HSA-8941858">
    <property type="pathway name" value="Regulation of RUNX3 expression and activity"/>
</dbReference>
<dbReference type="Reactome" id="R-HSA-8948751">
    <property type="pathway name" value="Regulation of PTEN stability and activity"/>
</dbReference>
<dbReference type="Reactome" id="R-HSA-8951664">
    <property type="pathway name" value="Neddylation"/>
</dbReference>
<dbReference type="Reactome" id="R-HSA-9010553">
    <property type="pathway name" value="Regulation of expression of SLITs and ROBOs"/>
</dbReference>
<dbReference type="Reactome" id="R-HSA-9020702">
    <property type="pathway name" value="Interleukin-1 signaling"/>
</dbReference>
<dbReference type="Reactome" id="R-HSA-9604323">
    <property type="pathway name" value="Negative regulation of NOTCH4 signaling"/>
</dbReference>
<dbReference type="Reactome" id="R-HSA-9755511">
    <property type="pathway name" value="KEAP1-NFE2L2 pathway"/>
</dbReference>
<dbReference type="Reactome" id="R-HSA-9762114">
    <property type="pathway name" value="GSK3B and BTRC:CUL1-mediated-degradation of NFE2L2"/>
</dbReference>
<dbReference type="Reactome" id="R-HSA-9824272">
    <property type="pathway name" value="Somitogenesis"/>
</dbReference>
<dbReference type="Reactome" id="R-HSA-983168">
    <property type="pathway name" value="Antigen processing: Ubiquitination &amp; Proteasome degradation"/>
</dbReference>
<dbReference type="Reactome" id="R-HSA-9907900">
    <property type="pathway name" value="Proteasome assembly"/>
</dbReference>
<dbReference type="SignaLink" id="Q99460"/>
<dbReference type="SIGNOR" id="Q99460"/>
<dbReference type="BioGRID-ORCS" id="5707">
    <property type="hits" value="811 hits in 1166 CRISPR screens"/>
</dbReference>
<dbReference type="CD-CODE" id="8C2F96ED">
    <property type="entry name" value="Centrosome"/>
</dbReference>
<dbReference type="ChiTaRS" id="PSMD1">
    <property type="organism name" value="human"/>
</dbReference>
<dbReference type="GeneWiki" id="PSMD1"/>
<dbReference type="GenomeRNAi" id="5707"/>
<dbReference type="Pharos" id="Q99460">
    <property type="development level" value="Tbio"/>
</dbReference>
<dbReference type="PRO" id="PR:Q99460"/>
<dbReference type="Proteomes" id="UP000005640">
    <property type="component" value="Chromosome 2"/>
</dbReference>
<dbReference type="RNAct" id="Q99460">
    <property type="molecule type" value="protein"/>
</dbReference>
<dbReference type="Bgee" id="ENSG00000173692">
    <property type="expression patterns" value="Expressed in tendon of biceps brachii and 213 other cell types or tissues"/>
</dbReference>
<dbReference type="ExpressionAtlas" id="Q99460">
    <property type="expression patterns" value="baseline and differential"/>
</dbReference>
<dbReference type="GO" id="GO:0035578">
    <property type="term" value="C:azurophil granule lumen"/>
    <property type="evidence" value="ECO:0000304"/>
    <property type="project" value="Reactome"/>
</dbReference>
<dbReference type="GO" id="GO:0005829">
    <property type="term" value="C:cytosol"/>
    <property type="evidence" value="ECO:0000304"/>
    <property type="project" value="Reactome"/>
</dbReference>
<dbReference type="GO" id="GO:0005576">
    <property type="term" value="C:extracellular region"/>
    <property type="evidence" value="ECO:0000304"/>
    <property type="project" value="Reactome"/>
</dbReference>
<dbReference type="GO" id="GO:0016020">
    <property type="term" value="C:membrane"/>
    <property type="evidence" value="ECO:0007005"/>
    <property type="project" value="UniProtKB"/>
</dbReference>
<dbReference type="GO" id="GO:0005654">
    <property type="term" value="C:nucleoplasm"/>
    <property type="evidence" value="ECO:0000304"/>
    <property type="project" value="Reactome"/>
</dbReference>
<dbReference type="GO" id="GO:0005634">
    <property type="term" value="C:nucleus"/>
    <property type="evidence" value="ECO:0000318"/>
    <property type="project" value="GO_Central"/>
</dbReference>
<dbReference type="GO" id="GO:0022624">
    <property type="term" value="C:proteasome accessory complex"/>
    <property type="evidence" value="ECO:0000250"/>
    <property type="project" value="UniProtKB"/>
</dbReference>
<dbReference type="GO" id="GO:0000502">
    <property type="term" value="C:proteasome complex"/>
    <property type="evidence" value="ECO:0000314"/>
    <property type="project" value="UniProtKB"/>
</dbReference>
<dbReference type="GO" id="GO:0005838">
    <property type="term" value="C:proteasome regulatory particle"/>
    <property type="evidence" value="ECO:0000304"/>
    <property type="project" value="ProtInc"/>
</dbReference>
<dbReference type="GO" id="GO:0008540">
    <property type="term" value="C:proteasome regulatory particle, base subcomplex"/>
    <property type="evidence" value="ECO:0000318"/>
    <property type="project" value="GO_Central"/>
</dbReference>
<dbReference type="GO" id="GO:0034515">
    <property type="term" value="C:proteasome storage granule"/>
    <property type="evidence" value="ECO:0000318"/>
    <property type="project" value="GO_Central"/>
</dbReference>
<dbReference type="GO" id="GO:0030234">
    <property type="term" value="F:enzyme regulator activity"/>
    <property type="evidence" value="ECO:0007669"/>
    <property type="project" value="InterPro"/>
</dbReference>
<dbReference type="GO" id="GO:0031625">
    <property type="term" value="F:ubiquitin protein ligase binding"/>
    <property type="evidence" value="ECO:0000353"/>
    <property type="project" value="ARUK-UCL"/>
</dbReference>
<dbReference type="GO" id="GO:0043161">
    <property type="term" value="P:proteasome-mediated ubiquitin-dependent protein catabolic process"/>
    <property type="evidence" value="ECO:0000318"/>
    <property type="project" value="GO_Central"/>
</dbReference>
<dbReference type="GO" id="GO:0042176">
    <property type="term" value="P:regulation of protein catabolic process"/>
    <property type="evidence" value="ECO:0007669"/>
    <property type="project" value="InterPro"/>
</dbReference>
<dbReference type="FunFam" id="1.25.10.10:FF:000017">
    <property type="entry name" value="26S proteasome non-ATPase regulatory subunit 1"/>
    <property type="match status" value="1"/>
</dbReference>
<dbReference type="Gene3D" id="1.25.10.10">
    <property type="entry name" value="Leucine-rich Repeat Variant"/>
    <property type="match status" value="1"/>
</dbReference>
<dbReference type="InterPro" id="IPR016642">
    <property type="entry name" value="26S_Psome_Rpn2"/>
</dbReference>
<dbReference type="InterPro" id="IPR011989">
    <property type="entry name" value="ARM-like"/>
</dbReference>
<dbReference type="InterPro" id="IPR016024">
    <property type="entry name" value="ARM-type_fold"/>
</dbReference>
<dbReference type="InterPro" id="IPR002015">
    <property type="entry name" value="Proteasome/cyclosome_rpt"/>
</dbReference>
<dbReference type="InterPro" id="IPR048570">
    <property type="entry name" value="PSMD1_RPN2_N"/>
</dbReference>
<dbReference type="InterPro" id="IPR040623">
    <property type="entry name" value="RPN2_C"/>
</dbReference>
<dbReference type="PANTHER" id="PTHR10943">
    <property type="entry name" value="26S PROTEASOME NON-ATPASE REGULATORY SUBUNIT"/>
    <property type="match status" value="1"/>
</dbReference>
<dbReference type="PANTHER" id="PTHR10943:SF2">
    <property type="entry name" value="26S PROTEASOME NON-ATPASE REGULATORY SUBUNIT 1"/>
    <property type="match status" value="1"/>
</dbReference>
<dbReference type="Pfam" id="PF13646">
    <property type="entry name" value="HEAT_2"/>
    <property type="match status" value="1"/>
</dbReference>
<dbReference type="Pfam" id="PF01851">
    <property type="entry name" value="PC_rep"/>
    <property type="match status" value="4"/>
</dbReference>
<dbReference type="Pfam" id="PF18004">
    <property type="entry name" value="RPN2_C"/>
    <property type="match status" value="1"/>
</dbReference>
<dbReference type="Pfam" id="PF21505">
    <property type="entry name" value="RPN2_N"/>
    <property type="match status" value="1"/>
</dbReference>
<dbReference type="PIRSF" id="PIRSF015947">
    <property type="entry name" value="26S_Psome_Rpn2"/>
    <property type="match status" value="1"/>
</dbReference>
<dbReference type="SUPFAM" id="SSF48371">
    <property type="entry name" value="ARM repeat"/>
    <property type="match status" value="1"/>
</dbReference>
<protein>
    <recommendedName>
        <fullName>26S proteasome non-ATPase regulatory subunit 1</fullName>
    </recommendedName>
    <alternativeName>
        <fullName>26S proteasome regulatory subunit RPN2</fullName>
    </alternativeName>
    <alternativeName>
        <fullName>26S proteasome regulatory subunit S1</fullName>
    </alternativeName>
    <alternativeName>
        <fullName>26S proteasome subunit p112</fullName>
    </alternativeName>
</protein>
<keyword id="KW-0002">3D-structure</keyword>
<keyword id="KW-0007">Acetylation</keyword>
<keyword id="KW-0025">Alternative splicing</keyword>
<keyword id="KW-0597">Phosphoprotein</keyword>
<keyword id="KW-0647">Proteasome</keyword>
<keyword id="KW-1267">Proteomics identification</keyword>
<keyword id="KW-1185">Reference proteome</keyword>
<keyword id="KW-0677">Repeat</keyword>
<accession>Q99460</accession>
<accession>B8ZZH9</accession>
<accession>Q24JU0</accession>
<accession>Q53TI2</accession>
<accession>Q6GMU5</accession>
<accession>Q6P2P4</accession>
<accession>Q6PJM7</accession>
<accession>Q6PKG9</accession>
<accession>Q86VU1</accession>
<accession>Q8IV79</accession>
<feature type="chain" id="PRO_0000173801" description="26S proteasome non-ATPase regulatory subunit 1">
    <location>
        <begin position="1"/>
        <end position="953"/>
    </location>
</feature>
<feature type="repeat" description="PC 1">
    <location>
        <begin position="403"/>
        <end position="436"/>
    </location>
</feature>
<feature type="repeat" description="PC 2">
    <location>
        <begin position="441"/>
        <end position="474"/>
    </location>
</feature>
<feature type="repeat" description="PC 3">
    <location>
        <begin position="476"/>
        <end position="510"/>
    </location>
</feature>
<feature type="repeat" description="PC 4">
    <location>
        <begin position="511"/>
        <end position="545"/>
    </location>
</feature>
<feature type="repeat" description="PC 5">
    <location>
        <begin position="547"/>
        <end position="580"/>
    </location>
</feature>
<feature type="repeat" description="PC 6">
    <location>
        <begin position="581"/>
        <end position="616"/>
    </location>
</feature>
<feature type="repeat" description="PC 7">
    <location>
        <begin position="617"/>
        <end position="649"/>
    </location>
</feature>
<feature type="repeat" description="PC 8">
    <location>
        <begin position="651"/>
        <end position="685"/>
    </location>
</feature>
<feature type="repeat" description="PC 9">
    <location>
        <begin position="686"/>
        <end position="726"/>
    </location>
</feature>
<feature type="repeat" description="PC 10">
    <location>
        <begin position="729"/>
        <end position="761"/>
    </location>
</feature>
<feature type="region of interest" description="Disordered" evidence="2">
    <location>
        <begin position="279"/>
        <end position="318"/>
    </location>
</feature>
<feature type="region of interest" description="Disordered" evidence="2">
    <location>
        <begin position="839"/>
        <end position="881"/>
    </location>
</feature>
<feature type="region of interest" description="Disordered" evidence="2">
    <location>
        <begin position="930"/>
        <end position="953"/>
    </location>
</feature>
<feature type="compositionally biased region" description="Basic and acidic residues" evidence="2">
    <location>
        <begin position="290"/>
        <end position="303"/>
    </location>
</feature>
<feature type="compositionally biased region" description="Basic and acidic residues" evidence="2">
    <location>
        <begin position="842"/>
        <end position="852"/>
    </location>
</feature>
<feature type="compositionally biased region" description="Basic and acidic residues" evidence="2">
    <location>
        <begin position="859"/>
        <end position="872"/>
    </location>
</feature>
<feature type="compositionally biased region" description="Acidic residues" evidence="2">
    <location>
        <begin position="936"/>
        <end position="953"/>
    </location>
</feature>
<feature type="modified residue" description="N-acetylmethionine" evidence="13 17">
    <location>
        <position position="1"/>
    </location>
</feature>
<feature type="modified residue" description="Phosphothreonine" evidence="11 18">
    <location>
        <position position="273"/>
    </location>
</feature>
<feature type="modified residue" description="Phosphoserine" evidence="11">
    <location>
        <position position="290"/>
    </location>
</feature>
<feature type="modified residue" description="N6-acetyllysine" evidence="14">
    <location>
        <position position="310"/>
    </location>
</feature>
<feature type="modified residue" description="Phosphothreonine" evidence="11 12 15 16 18">
    <location>
        <position position="311"/>
    </location>
</feature>
<feature type="modified residue" description="Phosphoserine" evidence="11 12 15 16 18">
    <location>
        <position position="315"/>
    </location>
</feature>
<feature type="modified residue" description="N6-acetyllysine" evidence="1">
    <location>
        <position position="720"/>
    </location>
</feature>
<feature type="modified residue" description="Phosphothreonine" evidence="18">
    <location>
        <position position="830"/>
    </location>
</feature>
<feature type="modified residue" description="Phosphoserine" evidence="18">
    <location>
        <position position="834"/>
    </location>
</feature>
<feature type="splice variant" id="VSP_011475" description="In isoform 2." evidence="9">
    <location>
        <begin position="797"/>
        <end position="827"/>
    </location>
</feature>
<feature type="sequence conflict" description="In Ref. 1; BAA07918." evidence="10" ref="1">
    <original>G</original>
    <variation>R</variation>
    <location>
        <position position="85"/>
    </location>
</feature>
<feature type="sequence conflict" description="In Ref. 1; BAA07918." evidence="10" ref="1">
    <original>R</original>
    <variation>S</variation>
    <location>
        <position position="616"/>
    </location>
</feature>
<feature type="helix" evidence="19">
    <location>
        <begin position="8"/>
        <end position="12"/>
    </location>
</feature>
<feature type="helix" evidence="19">
    <location>
        <begin position="17"/>
        <end position="30"/>
    </location>
</feature>
<feature type="turn" evidence="19">
    <location>
        <begin position="31"/>
        <end position="33"/>
    </location>
</feature>
<feature type="helix" evidence="19">
    <location>
        <begin position="35"/>
        <end position="41"/>
    </location>
</feature>
<feature type="helix" evidence="19">
    <location>
        <begin position="43"/>
        <end position="50"/>
    </location>
</feature>
<feature type="helix" evidence="19">
    <location>
        <begin position="57"/>
        <end position="71"/>
    </location>
</feature>
<feature type="helix" evidence="19">
    <location>
        <begin position="74"/>
        <end position="83"/>
    </location>
</feature>
<feature type="helix" evidence="19">
    <location>
        <begin position="86"/>
        <end position="88"/>
    </location>
</feature>
<feature type="turn" evidence="19">
    <location>
        <begin position="89"/>
        <end position="91"/>
    </location>
</feature>
<feature type="helix" evidence="19">
    <location>
        <begin position="95"/>
        <end position="117"/>
    </location>
</feature>
<feature type="helix" evidence="19">
    <location>
        <begin position="128"/>
        <end position="144"/>
    </location>
</feature>
<feature type="helix" evidence="19">
    <location>
        <begin position="147"/>
        <end position="156"/>
    </location>
</feature>
<feature type="helix" evidence="19">
    <location>
        <begin position="160"/>
        <end position="168"/>
    </location>
</feature>
<feature type="helix" evidence="19">
    <location>
        <begin position="175"/>
        <end position="186"/>
    </location>
</feature>
<feature type="helix" evidence="19">
    <location>
        <begin position="191"/>
        <end position="207"/>
    </location>
</feature>
<feature type="strand" evidence="19">
    <location>
        <begin position="208"/>
        <end position="210"/>
    </location>
</feature>
<feature type="helix" evidence="19">
    <location>
        <begin position="213"/>
        <end position="223"/>
    </location>
</feature>
<feature type="helix" evidence="19">
    <location>
        <begin position="226"/>
        <end position="238"/>
    </location>
</feature>
<feature type="helix" evidence="19">
    <location>
        <begin position="243"/>
        <end position="253"/>
    </location>
</feature>
<feature type="helix" evidence="19">
    <location>
        <begin position="258"/>
        <end position="269"/>
    </location>
</feature>
<feature type="helix" evidence="19">
    <location>
        <begin position="321"/>
        <end position="329"/>
    </location>
</feature>
<feature type="helix" evidence="19">
    <location>
        <begin position="332"/>
        <end position="344"/>
    </location>
</feature>
<feature type="helix" evidence="19">
    <location>
        <begin position="350"/>
        <end position="357"/>
    </location>
</feature>
<feature type="helix" evidence="19">
    <location>
        <begin position="365"/>
        <end position="376"/>
    </location>
</feature>
<feature type="turn" evidence="19">
    <location>
        <begin position="377"/>
        <end position="380"/>
    </location>
</feature>
<feature type="helix" evidence="19">
    <location>
        <begin position="384"/>
        <end position="388"/>
    </location>
</feature>
<feature type="helix" evidence="19">
    <location>
        <begin position="392"/>
        <end position="395"/>
    </location>
</feature>
<feature type="helix" evidence="19">
    <location>
        <begin position="399"/>
        <end position="411"/>
    </location>
</feature>
<feature type="turn" evidence="19">
    <location>
        <begin position="412"/>
        <end position="414"/>
    </location>
</feature>
<feature type="helix" evidence="19">
    <location>
        <begin position="416"/>
        <end position="418"/>
    </location>
</feature>
<feature type="helix" evidence="19">
    <location>
        <begin position="419"/>
        <end position="426"/>
    </location>
</feature>
<feature type="helix" evidence="19">
    <location>
        <begin position="436"/>
        <end position="449"/>
    </location>
</feature>
<feature type="helix" evidence="19">
    <location>
        <begin position="457"/>
        <end position="466"/>
    </location>
</feature>
<feature type="helix" evidence="19">
    <location>
        <begin position="472"/>
        <end position="484"/>
    </location>
</feature>
<feature type="turn" evidence="19">
    <location>
        <begin position="485"/>
        <end position="487"/>
    </location>
</feature>
<feature type="helix" evidence="19">
    <location>
        <begin position="491"/>
        <end position="503"/>
    </location>
</feature>
<feature type="helix" evidence="19">
    <location>
        <begin position="507"/>
        <end position="519"/>
    </location>
</feature>
<feature type="turn" evidence="19">
    <location>
        <begin position="520"/>
        <end position="522"/>
    </location>
</feature>
<feature type="helix" evidence="19">
    <location>
        <begin position="526"/>
        <end position="536"/>
    </location>
</feature>
<feature type="helix" evidence="19">
    <location>
        <begin position="542"/>
        <end position="554"/>
    </location>
</feature>
<feature type="turn" evidence="19">
    <location>
        <begin position="555"/>
        <end position="558"/>
    </location>
</feature>
<feature type="strand" evidence="19">
    <location>
        <begin position="560"/>
        <end position="562"/>
    </location>
</feature>
<feature type="helix" evidence="19">
    <location>
        <begin position="566"/>
        <end position="572"/>
    </location>
</feature>
<feature type="helix" evidence="19">
    <location>
        <begin position="576"/>
        <end position="589"/>
    </location>
</feature>
<feature type="helix" evidence="19">
    <location>
        <begin position="596"/>
        <end position="608"/>
    </location>
</feature>
<feature type="helix" evidence="19">
    <location>
        <begin position="612"/>
        <end position="626"/>
    </location>
</feature>
<feature type="turn" evidence="19">
    <location>
        <begin position="630"/>
        <end position="632"/>
    </location>
</feature>
<feature type="helix" evidence="19">
    <location>
        <begin position="633"/>
        <end position="640"/>
    </location>
</feature>
<feature type="helix" evidence="19">
    <location>
        <begin position="646"/>
        <end position="659"/>
    </location>
</feature>
<feature type="strand" evidence="19">
    <location>
        <begin position="660"/>
        <end position="662"/>
    </location>
</feature>
<feature type="helix" evidence="19">
    <location>
        <begin position="667"/>
        <end position="675"/>
    </location>
</feature>
<feature type="helix" evidence="19">
    <location>
        <begin position="681"/>
        <end position="694"/>
    </location>
</feature>
<feature type="turn" evidence="19">
    <location>
        <begin position="695"/>
        <end position="697"/>
    </location>
</feature>
<feature type="turn" evidence="19">
    <location>
        <begin position="700"/>
        <end position="702"/>
    </location>
</feature>
<feature type="helix" evidence="19">
    <location>
        <begin position="706"/>
        <end position="718"/>
    </location>
</feature>
<feature type="strand" evidence="19">
    <location>
        <begin position="720"/>
        <end position="722"/>
    </location>
</feature>
<feature type="helix" evidence="19">
    <location>
        <begin position="724"/>
        <end position="737"/>
    </location>
</feature>
<feature type="turn" evidence="19">
    <location>
        <begin position="738"/>
        <end position="743"/>
    </location>
</feature>
<feature type="strand" evidence="19">
    <location>
        <begin position="744"/>
        <end position="746"/>
    </location>
</feature>
<feature type="helix" evidence="19">
    <location>
        <begin position="757"/>
        <end position="767"/>
    </location>
</feature>
<feature type="helix" evidence="19">
    <location>
        <begin position="773"/>
        <end position="782"/>
    </location>
</feature>
<feature type="strand" evidence="19">
    <location>
        <begin position="783"/>
        <end position="785"/>
    </location>
</feature>
<feature type="strand" evidence="19">
    <location>
        <begin position="787"/>
        <end position="791"/>
    </location>
</feature>
<feature type="strand" evidence="19">
    <location>
        <begin position="793"/>
        <end position="795"/>
    </location>
</feature>
<feature type="turn" evidence="19">
    <location>
        <begin position="833"/>
        <end position="835"/>
    </location>
</feature>
<feature type="helix" evidence="19">
    <location>
        <begin position="836"/>
        <end position="850"/>
    </location>
</feature>
<feature type="strand" evidence="19">
    <location>
        <begin position="872"/>
        <end position="875"/>
    </location>
</feature>
<feature type="helix" evidence="19">
    <location>
        <begin position="886"/>
        <end position="888"/>
    </location>
</feature>
<feature type="strand" evidence="19">
    <location>
        <begin position="889"/>
        <end position="891"/>
    </location>
</feature>
<feature type="strand" evidence="19">
    <location>
        <begin position="897"/>
        <end position="899"/>
    </location>
</feature>
<feature type="strand" evidence="19">
    <location>
        <begin position="901"/>
        <end position="904"/>
    </location>
</feature>
<feature type="strand" evidence="19">
    <location>
        <begin position="910"/>
        <end position="915"/>
    </location>
</feature>
<reference key="1">
    <citation type="journal article" date="1996" name="Mol. Biol. Cell">
        <title>cDNA cloning of p112, the largest regulatory subunit of the human 26s proteasome, and functional analysis of its yeast homologue, sen3p.</title>
        <authorList>
            <person name="Yokota K."/>
            <person name="Kagawa S."/>
            <person name="Shimizu Y."/>
            <person name="Akioka H."/>
            <person name="Tsurumi C."/>
            <person name="Noda C."/>
            <person name="Fujimuro M."/>
            <person name="Yokosawa H."/>
            <person name="Fujiwara T."/>
            <person name="Takahashi E."/>
            <person name="Ohba M."/>
            <person name="Yamasaki M."/>
            <person name="DeMartino G.N."/>
            <person name="Slaughter C.A."/>
            <person name="Toh-e A."/>
            <person name="Tanaka K."/>
        </authorList>
    </citation>
    <scope>NUCLEOTIDE SEQUENCE [MRNA] (ISOFORM 1)</scope>
</reference>
<reference key="2">
    <citation type="journal article" date="2005" name="Nature">
        <title>Generation and annotation of the DNA sequences of human chromosomes 2 and 4.</title>
        <authorList>
            <person name="Hillier L.W."/>
            <person name="Graves T.A."/>
            <person name="Fulton R.S."/>
            <person name="Fulton L.A."/>
            <person name="Pepin K.H."/>
            <person name="Minx P."/>
            <person name="Wagner-McPherson C."/>
            <person name="Layman D."/>
            <person name="Wylie K."/>
            <person name="Sekhon M."/>
            <person name="Becker M.C."/>
            <person name="Fewell G.A."/>
            <person name="Delehaunty K.D."/>
            <person name="Miner T.L."/>
            <person name="Nash W.E."/>
            <person name="Kremitzki C."/>
            <person name="Oddy L."/>
            <person name="Du H."/>
            <person name="Sun H."/>
            <person name="Bradshaw-Cordum H."/>
            <person name="Ali J."/>
            <person name="Carter J."/>
            <person name="Cordes M."/>
            <person name="Harris A."/>
            <person name="Isak A."/>
            <person name="van Brunt A."/>
            <person name="Nguyen C."/>
            <person name="Du F."/>
            <person name="Courtney L."/>
            <person name="Kalicki J."/>
            <person name="Ozersky P."/>
            <person name="Abbott S."/>
            <person name="Armstrong J."/>
            <person name="Belter E.A."/>
            <person name="Caruso L."/>
            <person name="Cedroni M."/>
            <person name="Cotton M."/>
            <person name="Davidson T."/>
            <person name="Desai A."/>
            <person name="Elliott G."/>
            <person name="Erb T."/>
            <person name="Fronick C."/>
            <person name="Gaige T."/>
            <person name="Haakenson W."/>
            <person name="Haglund K."/>
            <person name="Holmes A."/>
            <person name="Harkins R."/>
            <person name="Kim K."/>
            <person name="Kruchowski S.S."/>
            <person name="Strong C.M."/>
            <person name="Grewal N."/>
            <person name="Goyea E."/>
            <person name="Hou S."/>
            <person name="Levy A."/>
            <person name="Martinka S."/>
            <person name="Mead K."/>
            <person name="McLellan M.D."/>
            <person name="Meyer R."/>
            <person name="Randall-Maher J."/>
            <person name="Tomlinson C."/>
            <person name="Dauphin-Kohlberg S."/>
            <person name="Kozlowicz-Reilly A."/>
            <person name="Shah N."/>
            <person name="Swearengen-Shahid S."/>
            <person name="Snider J."/>
            <person name="Strong J.T."/>
            <person name="Thompson J."/>
            <person name="Yoakum M."/>
            <person name="Leonard S."/>
            <person name="Pearman C."/>
            <person name="Trani L."/>
            <person name="Radionenko M."/>
            <person name="Waligorski J.E."/>
            <person name="Wang C."/>
            <person name="Rock S.M."/>
            <person name="Tin-Wollam A.-M."/>
            <person name="Maupin R."/>
            <person name="Latreille P."/>
            <person name="Wendl M.C."/>
            <person name="Yang S.-P."/>
            <person name="Pohl C."/>
            <person name="Wallis J.W."/>
            <person name="Spieth J."/>
            <person name="Bieri T.A."/>
            <person name="Berkowicz N."/>
            <person name="Nelson J.O."/>
            <person name="Osborne J."/>
            <person name="Ding L."/>
            <person name="Meyer R."/>
            <person name="Sabo A."/>
            <person name="Shotland Y."/>
            <person name="Sinha P."/>
            <person name="Wohldmann P.E."/>
            <person name="Cook L.L."/>
            <person name="Hickenbotham M.T."/>
            <person name="Eldred J."/>
            <person name="Williams D."/>
            <person name="Jones T.A."/>
            <person name="She X."/>
            <person name="Ciccarelli F.D."/>
            <person name="Izaurralde E."/>
            <person name="Taylor J."/>
            <person name="Schmutz J."/>
            <person name="Myers R.M."/>
            <person name="Cox D.R."/>
            <person name="Huang X."/>
            <person name="McPherson J.D."/>
            <person name="Mardis E.R."/>
            <person name="Clifton S.W."/>
            <person name="Warren W.C."/>
            <person name="Chinwalla A.T."/>
            <person name="Eddy S.R."/>
            <person name="Marra M.A."/>
            <person name="Ovcharenko I."/>
            <person name="Furey T.S."/>
            <person name="Miller W."/>
            <person name="Eichler E.E."/>
            <person name="Bork P."/>
            <person name="Suyama M."/>
            <person name="Torrents D."/>
            <person name="Waterston R.H."/>
            <person name="Wilson R.K."/>
        </authorList>
    </citation>
    <scope>NUCLEOTIDE SEQUENCE [LARGE SCALE GENOMIC DNA]</scope>
</reference>
<reference key="3">
    <citation type="journal article" date="2004" name="Genome Res.">
        <title>The status, quality, and expansion of the NIH full-length cDNA project: the Mammalian Gene Collection (MGC).</title>
        <authorList>
            <consortium name="The MGC Project Team"/>
        </authorList>
    </citation>
    <scope>NUCLEOTIDE SEQUENCE [LARGE SCALE MRNA] (ISOFORMS 1 AND 2)</scope>
    <source>
        <tissue>Cervix</tissue>
        <tissue>Liver</tissue>
        <tissue>Lymph</tissue>
        <tissue>Placenta</tissue>
        <tissue>Testis</tissue>
        <tissue>Uterus</tissue>
    </source>
</reference>
<reference key="4">
    <citation type="journal article" date="1992" name="Eur. J. Biochem.">
        <title>Demonstration that a human 26S proteolytic complex consists of a proteasome and multiple associated protein components and hydrolyzes ATP and ubiquitin-ligated proteins by closely linked mechanisms.</title>
        <authorList>
            <person name="Kanayama H.O."/>
            <person name="Tamura T."/>
            <person name="Ugai S."/>
            <person name="Kagawa S."/>
            <person name="Tanahashi N."/>
            <person name="Yoshimura T."/>
            <person name="Tanaka K."/>
            <person name="Ichihara A."/>
        </authorList>
    </citation>
    <scope>FUNCTION</scope>
</reference>
<reference key="5">
    <citation type="journal article" date="2006" name="EMBO J.">
        <title>A novel proteasome-interacting protein recruits the deubiquitinating enzyme UCH37 to 26S proteasomes.</title>
        <authorList>
            <person name="Hamazaki J."/>
            <person name="Iemura S."/>
            <person name="Natsume T."/>
            <person name="Yashiroda H."/>
            <person name="Tanaka K."/>
            <person name="Murata S."/>
        </authorList>
    </citation>
    <scope>INTERACTION WITH ADRM1</scope>
</reference>
<reference key="6">
    <citation type="journal article" date="2006" name="Nat. Cell Biol.">
        <title>Proteasome recruitment and activation of the Uch37 deubiquitinating enzyme by Adrm1.</title>
        <authorList>
            <person name="Yao T."/>
            <person name="Song L."/>
            <person name="Xu W."/>
            <person name="DeMartino G.N."/>
            <person name="Florens L."/>
            <person name="Swanson S.K."/>
            <person name="Washburn M.P."/>
            <person name="Conaway R.C."/>
            <person name="Conaway J.W."/>
            <person name="Cohen R.E."/>
        </authorList>
    </citation>
    <scope>INTERACTION WITH ADRM1</scope>
</reference>
<reference key="7">
    <citation type="journal article" date="2007" name="Biochemistry">
        <title>Mass spectrometric characterization of the affinity-purified human 26S proteasome complex.</title>
        <authorList>
            <person name="Wang X."/>
            <person name="Chen C.-F."/>
            <person name="Baker P.R."/>
            <person name="Chen P.-L."/>
            <person name="Kaiser P."/>
            <person name="Huang L."/>
        </authorList>
    </citation>
    <scope>PHOSPHORYLATION [LARGE SCALE ANALYSIS] AT THR-273; SER-290; THR-311 AND SER-315</scope>
    <scope>IDENTIFICATION BY MASS SPECTROMETRY [LARGE SCALE ANALYSIS]</scope>
    <source>
        <tissue>Embryonic kidney</tissue>
    </source>
</reference>
<reference key="8">
    <citation type="journal article" date="2008" name="Proc. Natl. Acad. Sci. U.S.A.">
        <title>A quantitative atlas of mitotic phosphorylation.</title>
        <authorList>
            <person name="Dephoure N."/>
            <person name="Zhou C."/>
            <person name="Villen J."/>
            <person name="Beausoleil S.A."/>
            <person name="Bakalarski C.E."/>
            <person name="Elledge S.J."/>
            <person name="Gygi S.P."/>
        </authorList>
    </citation>
    <scope>PHOSPHORYLATION [LARGE SCALE ANALYSIS] AT THR-311 AND SER-315</scope>
    <scope>IDENTIFICATION BY MASS SPECTROMETRY [LARGE SCALE ANALYSIS]</scope>
    <source>
        <tissue>Cervix carcinoma</tissue>
    </source>
</reference>
<reference key="9">
    <citation type="journal article" date="2009" name="Anal. Chem.">
        <title>Lys-N and trypsin cover complementary parts of the phosphoproteome in a refined SCX-based approach.</title>
        <authorList>
            <person name="Gauci S."/>
            <person name="Helbig A.O."/>
            <person name="Slijper M."/>
            <person name="Krijgsveld J."/>
            <person name="Heck A.J."/>
            <person name="Mohammed S."/>
        </authorList>
    </citation>
    <scope>ACETYLATION [LARGE SCALE ANALYSIS] AT MET-1</scope>
    <scope>IDENTIFICATION BY MASS SPECTROMETRY [LARGE SCALE ANALYSIS]</scope>
</reference>
<reference key="10">
    <citation type="journal article" date="2009" name="Sci. Signal.">
        <title>Quantitative phosphoproteomic analysis of T cell receptor signaling reveals system-wide modulation of protein-protein interactions.</title>
        <authorList>
            <person name="Mayya V."/>
            <person name="Lundgren D.H."/>
            <person name="Hwang S.-I."/>
            <person name="Rezaul K."/>
            <person name="Wu L."/>
            <person name="Eng J.K."/>
            <person name="Rodionov V."/>
            <person name="Han D.K."/>
        </authorList>
    </citation>
    <scope>PHOSPHORYLATION [LARGE SCALE ANALYSIS] AT THR-311 AND SER-315</scope>
    <scope>IDENTIFICATION BY MASS SPECTROMETRY [LARGE SCALE ANALYSIS]</scope>
    <source>
        <tissue>Leukemic T-cell</tissue>
    </source>
</reference>
<reference key="11">
    <citation type="journal article" date="2009" name="Science">
        <title>Lysine acetylation targets protein complexes and co-regulates major cellular functions.</title>
        <authorList>
            <person name="Choudhary C."/>
            <person name="Kumar C."/>
            <person name="Gnad F."/>
            <person name="Nielsen M.L."/>
            <person name="Rehman M."/>
            <person name="Walther T.C."/>
            <person name="Olsen J.V."/>
            <person name="Mann M."/>
        </authorList>
    </citation>
    <scope>ACETYLATION [LARGE SCALE ANALYSIS] AT LYS-310</scope>
    <scope>IDENTIFICATION BY MASS SPECTROMETRY [LARGE SCALE ANALYSIS]</scope>
</reference>
<reference key="12">
    <citation type="journal article" date="2010" name="Sci. Signal.">
        <title>Quantitative phosphoproteomics reveals widespread full phosphorylation site occupancy during mitosis.</title>
        <authorList>
            <person name="Olsen J.V."/>
            <person name="Vermeulen M."/>
            <person name="Santamaria A."/>
            <person name="Kumar C."/>
            <person name="Miller M.L."/>
            <person name="Jensen L.J."/>
            <person name="Gnad F."/>
            <person name="Cox J."/>
            <person name="Jensen T.S."/>
            <person name="Nigg E.A."/>
            <person name="Brunak S."/>
            <person name="Mann M."/>
        </authorList>
    </citation>
    <scope>IDENTIFICATION BY MASS SPECTROMETRY [LARGE SCALE ANALYSIS]</scope>
    <source>
        <tissue>Cervix carcinoma</tissue>
    </source>
</reference>
<reference key="13">
    <citation type="journal article" date="2011" name="BMC Syst. Biol.">
        <title>Initial characterization of the human central proteome.</title>
        <authorList>
            <person name="Burkard T.R."/>
            <person name="Planyavsky M."/>
            <person name="Kaupe I."/>
            <person name="Breitwieser F.P."/>
            <person name="Buerckstuemmer T."/>
            <person name="Bennett K.L."/>
            <person name="Superti-Furga G."/>
            <person name="Colinge J."/>
        </authorList>
    </citation>
    <scope>IDENTIFICATION BY MASS SPECTROMETRY [LARGE SCALE ANALYSIS]</scope>
</reference>
<reference key="14">
    <citation type="journal article" date="2011" name="Sci. Signal.">
        <title>System-wide temporal characterization of the proteome and phosphoproteome of human embryonic stem cell differentiation.</title>
        <authorList>
            <person name="Rigbolt K.T."/>
            <person name="Prokhorova T.A."/>
            <person name="Akimov V."/>
            <person name="Henningsen J."/>
            <person name="Johansen P.T."/>
            <person name="Kratchmarova I."/>
            <person name="Kassem M."/>
            <person name="Mann M."/>
            <person name="Olsen J.V."/>
            <person name="Blagoev B."/>
        </authorList>
    </citation>
    <scope>PHOSPHORYLATION [LARGE SCALE ANALYSIS] AT THR-311 AND SER-315</scope>
    <scope>IDENTIFICATION BY MASS SPECTROMETRY [LARGE SCALE ANALYSIS]</scope>
</reference>
<reference key="15">
    <citation type="journal article" date="2012" name="Mol. Cell. Proteomics">
        <title>Comparative large-scale characterisation of plant vs. mammal proteins reveals similar and idiosyncratic N-alpha acetylation features.</title>
        <authorList>
            <person name="Bienvenut W.V."/>
            <person name="Sumpton D."/>
            <person name="Martinez A."/>
            <person name="Lilla S."/>
            <person name="Espagne C."/>
            <person name="Meinnel T."/>
            <person name="Giglione C."/>
        </authorList>
    </citation>
    <scope>ACETYLATION [LARGE SCALE ANALYSIS] AT MET-1</scope>
    <scope>IDENTIFICATION BY MASS SPECTROMETRY [LARGE SCALE ANALYSIS]</scope>
</reference>
<reference key="16">
    <citation type="journal article" date="2013" name="J. Proteome Res.">
        <title>Toward a comprehensive characterization of a human cancer cell phosphoproteome.</title>
        <authorList>
            <person name="Zhou H."/>
            <person name="Di Palma S."/>
            <person name="Preisinger C."/>
            <person name="Peng M."/>
            <person name="Polat A.N."/>
            <person name="Heck A.J."/>
            <person name="Mohammed S."/>
        </authorList>
    </citation>
    <scope>PHOSPHORYLATION [LARGE SCALE ANALYSIS] AT THR-273; THR-311; SER-315; THR-830 AND SER-834</scope>
    <scope>IDENTIFICATION BY MASS SPECTROMETRY [LARGE SCALE ANALYSIS]</scope>
    <source>
        <tissue>Cervix carcinoma</tissue>
        <tissue>Erythroleukemia</tissue>
    </source>
</reference>
<reference key="17">
    <citation type="journal article" date="2014" name="J. Proteomics">
        <title>An enzyme assisted RP-RPLC approach for in-depth analysis of human liver phosphoproteome.</title>
        <authorList>
            <person name="Bian Y."/>
            <person name="Song C."/>
            <person name="Cheng K."/>
            <person name="Dong M."/>
            <person name="Wang F."/>
            <person name="Huang J."/>
            <person name="Sun D."/>
            <person name="Wang L."/>
            <person name="Ye M."/>
            <person name="Zou H."/>
        </authorList>
    </citation>
    <scope>IDENTIFICATION BY MASS SPECTROMETRY [LARGE SCALE ANALYSIS]</scope>
    <source>
        <tissue>Liver</tissue>
    </source>
</reference>
<reference key="18">
    <citation type="journal article" date="2018" name="Mol. Cell">
        <title>ZFAND1 recruits p97 and the 26S proteasome to promote the clearance of arsenite-induced stress granules.</title>
        <authorList>
            <person name="Turakhiya A."/>
            <person name="Meyer S.R."/>
            <person name="Marincola G."/>
            <person name="Boehm S."/>
            <person name="Vanselow J.T."/>
            <person name="Schlosser A."/>
            <person name="Hofmann K."/>
            <person name="Buchberger A."/>
        </authorList>
    </citation>
    <scope>INTERACTION WITH ZFAND1</scope>
</reference>
<reference key="19">
    <citation type="journal article" date="2016" name="Nat. Struct. Mol. Biol.">
        <title>An atomic structure of the human 26S proteasome.</title>
        <authorList>
            <person name="Huang X."/>
            <person name="Luan B."/>
            <person name="Wu J."/>
            <person name="Shi Y."/>
        </authorList>
    </citation>
    <scope>STRUCTURE BY ELECTRON MICROSCOPY (3.50 ANGSTROMS)</scope>
    <scope>SUBUNIT</scope>
</reference>
<reference key="20">
    <citation type="journal article" date="2016" name="Proc. Natl. Acad. Sci. U.S.A.">
        <title>Structure of the human 26S proteasome at a resolution of 3.9 Aa.</title>
        <authorList>
            <person name="Schweitzer A."/>
            <person name="Aufderheide A."/>
            <person name="Rudack T."/>
            <person name="Beck F."/>
            <person name="Pfeifer G."/>
            <person name="Plitzko J.M."/>
            <person name="Sakata E."/>
            <person name="Schulten K."/>
            <person name="Foerster F."/>
            <person name="Baumeister W."/>
        </authorList>
    </citation>
    <scope>STRUCTURE BY ELECTRON MICROSCOPY (4.50 ANGSTROMS)</scope>
    <scope>SUBUNIT</scope>
</reference>
<proteinExistence type="evidence at protein level"/>
<evidence type="ECO:0000250" key="1">
    <source>
        <dbReference type="UniProtKB" id="Q3TXS7"/>
    </source>
</evidence>
<evidence type="ECO:0000256" key="2">
    <source>
        <dbReference type="SAM" id="MobiDB-lite"/>
    </source>
</evidence>
<evidence type="ECO:0000269" key="3">
    <source>
    </source>
</evidence>
<evidence type="ECO:0000269" key="4">
    <source>
    </source>
</evidence>
<evidence type="ECO:0000269" key="5">
    <source>
    </source>
</evidence>
<evidence type="ECO:0000269" key="6">
    <source>
    </source>
</evidence>
<evidence type="ECO:0000269" key="7">
    <source>
    </source>
</evidence>
<evidence type="ECO:0000269" key="8">
    <source>
    </source>
</evidence>
<evidence type="ECO:0000303" key="9">
    <source>
    </source>
</evidence>
<evidence type="ECO:0000305" key="10"/>
<evidence type="ECO:0007744" key="11">
    <source>
    </source>
</evidence>
<evidence type="ECO:0007744" key="12">
    <source>
    </source>
</evidence>
<evidence type="ECO:0007744" key="13">
    <source>
    </source>
</evidence>
<evidence type="ECO:0007744" key="14">
    <source>
    </source>
</evidence>
<evidence type="ECO:0007744" key="15">
    <source>
    </source>
</evidence>
<evidence type="ECO:0007744" key="16">
    <source>
    </source>
</evidence>
<evidence type="ECO:0007744" key="17">
    <source>
    </source>
</evidence>
<evidence type="ECO:0007744" key="18">
    <source>
    </source>
</evidence>
<evidence type="ECO:0007829" key="19">
    <source>
        <dbReference type="PDB" id="9E8J"/>
    </source>
</evidence>
<gene>
    <name type="primary">PSMD1</name>
</gene>
<organism>
    <name type="scientific">Homo sapiens</name>
    <name type="common">Human</name>
    <dbReference type="NCBI Taxonomy" id="9606"/>
    <lineage>
        <taxon>Eukaryota</taxon>
        <taxon>Metazoa</taxon>
        <taxon>Chordata</taxon>
        <taxon>Craniata</taxon>
        <taxon>Vertebrata</taxon>
        <taxon>Euteleostomi</taxon>
        <taxon>Mammalia</taxon>
        <taxon>Eutheria</taxon>
        <taxon>Euarchontoglires</taxon>
        <taxon>Primates</taxon>
        <taxon>Haplorrhini</taxon>
        <taxon>Catarrhini</taxon>
        <taxon>Hominidae</taxon>
        <taxon>Homo</taxon>
    </lineage>
</organism>
<sequence>MITSAAGIISLLDEDEPQLKEFALHKLNAVVNDFWAEISESVDKIEVLYEDEGFRSRQFAALVASKVFYHLGAFEESLNYALGAGDLFNVNDNSEYVETIIAKCIDHYTKQCVENADLPEGEKKPIDQRLEGIVNKMFQRCLDDHKYKQAIGIALETRRLDVFEKTILESNDVPGMLAYSLKLCMSLMQNKQFRNKVLRVLVKIYMNLEKPDFINVCQCLIFLDDPQAVSDILEKLVKEDNLLMAYQICFDLYESASQQFLSSVIQNLRTVGTPIASVPGSTNTGTVPGSEKDSDSMETEEKTSSAFVGKTPEASPEPKDQTLKMIKILSGEMAIELHLQFLIRNNNTDLMILKNTKDAVRNSVCHTATVIANSFMHCGTTSDQFLRDNLEWLARATNWAKFTATASLGVIHKGHEKEALQLMATYLPKDTSPGSAYQEGGGLYALGLIHANHGGDIIDYLLNQLKNASNDIVRHGGSLGLGLAAMGTARQDVYDLLKTNLYQDDAVTGEAAGLALGLVMLGSKNAQAIEDMVGYAQETQHEKILRGLAVGIALVMYGRMEEADALIESLCRDKDPILRRSGMYTVAMAYCGSGNNKAIRRLLHVAVSDVNDDVRRAAVESLGFILFRTPEQCPSVVSLLSESYNPHVRYGAAMALGICCAGTGNKEAINLLEPMTNDPVNYVRQGALIASALIMIQQTEITCPKVNQFRQLYSKVINDKHDDVMAKFGAILAQGILDAGGHNVTISLQSRTGHTHMPSVVGVLVFTQFWFWFPLSHFLSLAYTPTCVIGLNKDLKMPKVQYKSNCKPSTFAYPAPLEVPKEKEKEKVSTAVLSITAKAKKKEKEKEKKEEEKMEVDEAEKKEEKEKKKEPEPNFQLLDNPARVMPAQLKVLTMPETCRYQPFKPLSIGGIIILKDTSEDIEELVEPVAAHGPKIEEEEQEPEPPEPFEYIDD</sequence>